<gene>
    <name evidence="1" type="primary">orn</name>
    <name type="synonym">ornA</name>
    <name type="ordered locus">SAV_5260</name>
</gene>
<proteinExistence type="inferred from homology"/>
<sequence length="200" mass="21995">MNDRMVWIDCEMTGLSLSDDALIEVAALVTDSELNVLGEGVDIVIRPPDAALETMPEVVRTMHTASGLLDELAAGTTLADAEAQVLAYVREHVKEPGKAPLCGNSVGTDRGFLARDMSALETYLHYRIVDVSSVKELARRWYPRAYFNSPEKSGNHRALADIRESIAELRYYREAIFVPQPGPDSETARTIAAKHVLPAQ</sequence>
<organism>
    <name type="scientific">Streptomyces avermitilis (strain ATCC 31267 / DSM 46492 / JCM 5070 / NBRC 14893 / NCIMB 12804 / NRRL 8165 / MA-4680)</name>
    <dbReference type="NCBI Taxonomy" id="227882"/>
    <lineage>
        <taxon>Bacteria</taxon>
        <taxon>Bacillati</taxon>
        <taxon>Actinomycetota</taxon>
        <taxon>Actinomycetes</taxon>
        <taxon>Kitasatosporales</taxon>
        <taxon>Streptomycetaceae</taxon>
        <taxon>Streptomyces</taxon>
    </lineage>
</organism>
<protein>
    <recommendedName>
        <fullName evidence="1">Oligoribonuclease</fullName>
        <ecNumber evidence="1">3.1.15.-</ecNumber>
    </recommendedName>
</protein>
<evidence type="ECO:0000255" key="1">
    <source>
        <dbReference type="HAMAP-Rule" id="MF_00045"/>
    </source>
</evidence>
<feature type="chain" id="PRO_0000111072" description="Oligoribonuclease">
    <location>
        <begin position="1"/>
        <end position="200"/>
    </location>
</feature>
<feature type="domain" description="Exonuclease" evidence="1">
    <location>
        <begin position="5"/>
        <end position="169"/>
    </location>
</feature>
<feature type="active site" evidence="1">
    <location>
        <position position="126"/>
    </location>
</feature>
<comment type="function">
    <text evidence="1">3'-to-5' exoribonuclease specific for small oligoribonucleotides.</text>
</comment>
<comment type="subcellular location">
    <subcellularLocation>
        <location evidence="1">Cytoplasm</location>
    </subcellularLocation>
</comment>
<comment type="similarity">
    <text evidence="1">Belongs to the oligoribonuclease family.</text>
</comment>
<keyword id="KW-0963">Cytoplasm</keyword>
<keyword id="KW-0269">Exonuclease</keyword>
<keyword id="KW-0378">Hydrolase</keyword>
<keyword id="KW-0540">Nuclease</keyword>
<keyword id="KW-1185">Reference proteome</keyword>
<reference key="1">
    <citation type="journal article" date="2001" name="Proc. Natl. Acad. Sci. U.S.A.">
        <title>Genome sequence of an industrial microorganism Streptomyces avermitilis: deducing the ability of producing secondary metabolites.</title>
        <authorList>
            <person name="Omura S."/>
            <person name="Ikeda H."/>
            <person name="Ishikawa J."/>
            <person name="Hanamoto A."/>
            <person name="Takahashi C."/>
            <person name="Shinose M."/>
            <person name="Takahashi Y."/>
            <person name="Horikawa H."/>
            <person name="Nakazawa H."/>
            <person name="Osonoe T."/>
            <person name="Kikuchi H."/>
            <person name="Shiba T."/>
            <person name="Sakaki Y."/>
            <person name="Hattori M."/>
        </authorList>
    </citation>
    <scope>NUCLEOTIDE SEQUENCE [LARGE SCALE GENOMIC DNA]</scope>
    <source>
        <strain>ATCC 31267 / DSM 46492 / JCM 5070 / NBRC 14893 / NCIMB 12804 / NRRL 8165 / MA-4680</strain>
    </source>
</reference>
<reference key="2">
    <citation type="journal article" date="2003" name="Nat. Biotechnol.">
        <title>Complete genome sequence and comparative analysis of the industrial microorganism Streptomyces avermitilis.</title>
        <authorList>
            <person name="Ikeda H."/>
            <person name="Ishikawa J."/>
            <person name="Hanamoto A."/>
            <person name="Shinose M."/>
            <person name="Kikuchi H."/>
            <person name="Shiba T."/>
            <person name="Sakaki Y."/>
            <person name="Hattori M."/>
            <person name="Omura S."/>
        </authorList>
    </citation>
    <scope>NUCLEOTIDE SEQUENCE [LARGE SCALE GENOMIC DNA]</scope>
    <source>
        <strain>ATCC 31267 / DSM 46492 / JCM 5070 / NBRC 14893 / NCIMB 12804 / NRRL 8165 / MA-4680</strain>
    </source>
</reference>
<dbReference type="EC" id="3.1.15.-" evidence="1"/>
<dbReference type="EMBL" id="BA000030">
    <property type="protein sequence ID" value="BAC72972.1"/>
    <property type="molecule type" value="Genomic_DNA"/>
</dbReference>
<dbReference type="RefSeq" id="WP_010986664.1">
    <property type="nucleotide sequence ID" value="NZ_JZJK01000072.1"/>
</dbReference>
<dbReference type="SMR" id="Q82CS8"/>
<dbReference type="GeneID" id="41542350"/>
<dbReference type="KEGG" id="sma:SAVERM_5260"/>
<dbReference type="eggNOG" id="COG1949">
    <property type="taxonomic scope" value="Bacteria"/>
</dbReference>
<dbReference type="HOGENOM" id="CLU_064761_3_0_11"/>
<dbReference type="OrthoDB" id="9801329at2"/>
<dbReference type="Proteomes" id="UP000000428">
    <property type="component" value="Chromosome"/>
</dbReference>
<dbReference type="GO" id="GO:0005737">
    <property type="term" value="C:cytoplasm"/>
    <property type="evidence" value="ECO:0007669"/>
    <property type="project" value="UniProtKB-SubCell"/>
</dbReference>
<dbReference type="GO" id="GO:0000175">
    <property type="term" value="F:3'-5'-RNA exonuclease activity"/>
    <property type="evidence" value="ECO:0007669"/>
    <property type="project" value="InterPro"/>
</dbReference>
<dbReference type="GO" id="GO:0003676">
    <property type="term" value="F:nucleic acid binding"/>
    <property type="evidence" value="ECO:0007669"/>
    <property type="project" value="InterPro"/>
</dbReference>
<dbReference type="CDD" id="cd06135">
    <property type="entry name" value="Orn"/>
    <property type="match status" value="1"/>
</dbReference>
<dbReference type="FunFam" id="3.30.420.10:FF:000003">
    <property type="entry name" value="Oligoribonuclease"/>
    <property type="match status" value="1"/>
</dbReference>
<dbReference type="Gene3D" id="3.30.420.10">
    <property type="entry name" value="Ribonuclease H-like superfamily/Ribonuclease H"/>
    <property type="match status" value="1"/>
</dbReference>
<dbReference type="HAMAP" id="MF_00045">
    <property type="entry name" value="Oligoribonuclease"/>
    <property type="match status" value="1"/>
</dbReference>
<dbReference type="InterPro" id="IPR013520">
    <property type="entry name" value="Exonuclease_RNaseT/DNA_pol3"/>
</dbReference>
<dbReference type="InterPro" id="IPR022894">
    <property type="entry name" value="Oligoribonuclease"/>
</dbReference>
<dbReference type="InterPro" id="IPR012337">
    <property type="entry name" value="RNaseH-like_sf"/>
</dbReference>
<dbReference type="InterPro" id="IPR036397">
    <property type="entry name" value="RNaseH_sf"/>
</dbReference>
<dbReference type="NCBIfam" id="NF003765">
    <property type="entry name" value="PRK05359.1"/>
    <property type="match status" value="1"/>
</dbReference>
<dbReference type="PANTHER" id="PTHR11046">
    <property type="entry name" value="OLIGORIBONUCLEASE, MITOCHONDRIAL"/>
    <property type="match status" value="1"/>
</dbReference>
<dbReference type="PANTHER" id="PTHR11046:SF0">
    <property type="entry name" value="OLIGORIBONUCLEASE, MITOCHONDRIAL"/>
    <property type="match status" value="1"/>
</dbReference>
<dbReference type="Pfam" id="PF00929">
    <property type="entry name" value="RNase_T"/>
    <property type="match status" value="1"/>
</dbReference>
<dbReference type="SMART" id="SM00479">
    <property type="entry name" value="EXOIII"/>
    <property type="match status" value="1"/>
</dbReference>
<dbReference type="SUPFAM" id="SSF53098">
    <property type="entry name" value="Ribonuclease H-like"/>
    <property type="match status" value="1"/>
</dbReference>
<accession>Q82CS8</accession>
<name>ORN_STRAW</name>